<sequence>MASKQLKLVIITGMSGAGKTVAMQSLEDLGYFCVDNLPPSLLPKFWELMKESDKMDKIALVMDLRGREFFDSIEPALDELDNTNFITTKILFLEADDKVLVSRYKETRRHHPLEPNGSVLDGINAERELLSDLKGRSQLVINTSNMAPRELRERINNEFQTEDKDVFNVQLMSFGFKYGIPIDADLVFDVRFLPNPHYIDKMRPLTGLDKDVYEYVMKWPETGAFLDKLIDLLMFTLPFYKREGKTQLVIAIGCTGGQHRSVALTEYVGKAIQQKYETTISHRDMKRRKGR</sequence>
<proteinExistence type="inferred from homology"/>
<name>Y2422_LISW6</name>
<dbReference type="EMBL" id="AM263198">
    <property type="protein sequence ID" value="CAK21840.1"/>
    <property type="molecule type" value="Genomic_DNA"/>
</dbReference>
<dbReference type="RefSeq" id="WP_011703158.1">
    <property type="nucleotide sequence ID" value="NC_008555.1"/>
</dbReference>
<dbReference type="SMR" id="A0ALF8"/>
<dbReference type="STRING" id="386043.lwe2422"/>
<dbReference type="GeneID" id="61190341"/>
<dbReference type="KEGG" id="lwe:lwe2422"/>
<dbReference type="eggNOG" id="COG1660">
    <property type="taxonomic scope" value="Bacteria"/>
</dbReference>
<dbReference type="HOGENOM" id="CLU_059558_0_0_9"/>
<dbReference type="OrthoDB" id="9784461at2"/>
<dbReference type="Proteomes" id="UP000000779">
    <property type="component" value="Chromosome"/>
</dbReference>
<dbReference type="GO" id="GO:0005524">
    <property type="term" value="F:ATP binding"/>
    <property type="evidence" value="ECO:0007669"/>
    <property type="project" value="UniProtKB-UniRule"/>
</dbReference>
<dbReference type="GO" id="GO:0005525">
    <property type="term" value="F:GTP binding"/>
    <property type="evidence" value="ECO:0007669"/>
    <property type="project" value="UniProtKB-UniRule"/>
</dbReference>
<dbReference type="Gene3D" id="3.40.50.300">
    <property type="entry name" value="P-loop containing nucleotide triphosphate hydrolases"/>
    <property type="match status" value="1"/>
</dbReference>
<dbReference type="HAMAP" id="MF_00636">
    <property type="entry name" value="RapZ_like"/>
    <property type="match status" value="1"/>
</dbReference>
<dbReference type="InterPro" id="IPR027417">
    <property type="entry name" value="P-loop_NTPase"/>
</dbReference>
<dbReference type="InterPro" id="IPR005337">
    <property type="entry name" value="RapZ-like"/>
</dbReference>
<dbReference type="InterPro" id="IPR053930">
    <property type="entry name" value="RapZ-like_N"/>
</dbReference>
<dbReference type="InterPro" id="IPR053931">
    <property type="entry name" value="RapZ_C"/>
</dbReference>
<dbReference type="NCBIfam" id="NF003828">
    <property type="entry name" value="PRK05416.1"/>
    <property type="match status" value="1"/>
</dbReference>
<dbReference type="PANTHER" id="PTHR30448">
    <property type="entry name" value="RNASE ADAPTER PROTEIN RAPZ"/>
    <property type="match status" value="1"/>
</dbReference>
<dbReference type="PANTHER" id="PTHR30448:SF0">
    <property type="entry name" value="RNASE ADAPTER PROTEIN RAPZ"/>
    <property type="match status" value="1"/>
</dbReference>
<dbReference type="Pfam" id="PF22740">
    <property type="entry name" value="PapZ_C"/>
    <property type="match status" value="1"/>
</dbReference>
<dbReference type="Pfam" id="PF03668">
    <property type="entry name" value="RapZ-like_N"/>
    <property type="match status" value="1"/>
</dbReference>
<dbReference type="PIRSF" id="PIRSF005052">
    <property type="entry name" value="P-loopkin"/>
    <property type="match status" value="1"/>
</dbReference>
<dbReference type="SUPFAM" id="SSF52540">
    <property type="entry name" value="P-loop containing nucleoside triphosphate hydrolases"/>
    <property type="match status" value="1"/>
</dbReference>
<gene>
    <name type="ordered locus">lwe2422</name>
</gene>
<keyword id="KW-0067">ATP-binding</keyword>
<keyword id="KW-0342">GTP-binding</keyword>
<keyword id="KW-0547">Nucleotide-binding</keyword>
<comment type="function">
    <text evidence="1">Displays ATPase and GTPase activities.</text>
</comment>
<comment type="similarity">
    <text evidence="1">Belongs to the RapZ-like family.</text>
</comment>
<organism>
    <name type="scientific">Listeria welshimeri serovar 6b (strain ATCC 35897 / DSM 20650 / CCUG 15529 / CIP 8149 / NCTC 11857 / SLCC 5334 / V8)</name>
    <dbReference type="NCBI Taxonomy" id="386043"/>
    <lineage>
        <taxon>Bacteria</taxon>
        <taxon>Bacillati</taxon>
        <taxon>Bacillota</taxon>
        <taxon>Bacilli</taxon>
        <taxon>Bacillales</taxon>
        <taxon>Listeriaceae</taxon>
        <taxon>Listeria</taxon>
    </lineage>
</organism>
<accession>A0ALF8</accession>
<feature type="chain" id="PRO_1000056834" description="Nucleotide-binding protein lwe2422">
    <location>
        <begin position="1"/>
        <end position="291"/>
    </location>
</feature>
<feature type="binding site" evidence="1">
    <location>
        <begin position="13"/>
        <end position="20"/>
    </location>
    <ligand>
        <name>ATP</name>
        <dbReference type="ChEBI" id="CHEBI:30616"/>
    </ligand>
</feature>
<feature type="binding site" evidence="1">
    <location>
        <begin position="63"/>
        <end position="66"/>
    </location>
    <ligand>
        <name>GTP</name>
        <dbReference type="ChEBI" id="CHEBI:37565"/>
    </ligand>
</feature>
<reference key="1">
    <citation type="journal article" date="2006" name="J. Bacteriol.">
        <title>Whole-genome sequence of Listeria welshimeri reveals common steps in genome reduction with Listeria innocua as compared to Listeria monocytogenes.</title>
        <authorList>
            <person name="Hain T."/>
            <person name="Steinweg C."/>
            <person name="Kuenne C.T."/>
            <person name="Billion A."/>
            <person name="Ghai R."/>
            <person name="Chatterjee S.S."/>
            <person name="Domann E."/>
            <person name="Kaerst U."/>
            <person name="Goesmann A."/>
            <person name="Bekel T."/>
            <person name="Bartels D."/>
            <person name="Kaiser O."/>
            <person name="Meyer F."/>
            <person name="Puehler A."/>
            <person name="Weisshaar B."/>
            <person name="Wehland J."/>
            <person name="Liang C."/>
            <person name="Dandekar T."/>
            <person name="Lampidis R."/>
            <person name="Kreft J."/>
            <person name="Goebel W."/>
            <person name="Chakraborty T."/>
        </authorList>
    </citation>
    <scope>NUCLEOTIDE SEQUENCE [LARGE SCALE GENOMIC DNA]</scope>
    <source>
        <strain>ATCC 35897 / DSM 20650 / CCUG 15529 / CIP 8149 / NCTC 11857 / SLCC 5334 / V8</strain>
    </source>
</reference>
<evidence type="ECO:0000255" key="1">
    <source>
        <dbReference type="HAMAP-Rule" id="MF_00636"/>
    </source>
</evidence>
<protein>
    <recommendedName>
        <fullName evidence="1">Nucleotide-binding protein lwe2422</fullName>
    </recommendedName>
</protein>